<sequence>MQSTSKYNCDSDYIAGRNYNTKRTNGREELSTGLTNEETGVVNISDENNIFFKKNIDYVKGSRIGKYKLIKTLGKGSCAKVVQAEDCETGEYVAIKIIERTPKQLSDIRIYREALICSLFNHPHIIKLLDFFHTTEYFFLIFEYVDGQQLYDIILNKGYLDEDEARKYFRQIISAVDYSHRNSVVHRDLKIENILIDRNDNIKLIDFGLSNFYDADDLLGTFCGSLYFAAPELLLGTRYTGPEIDVWSLGVILYVMLVGKVPFDDENIHALQNKIKSCKFKFEKTISPEAQDLITNMILSSDARINLENVKKSKWTNLGYKNLTNNFMTLRKPIIEINKNILRALQAAMFFQFTDMERVLMQYLQICKGDKHSLEQTYWCKKPVVILYYLTMEKFNELNYKSIPIDIDTGMNTKSLIDITIEKQPIIIYNFVRFTNAKKNNNPYNLFFSRSVFEPEMEFLNMTKDVSLDSCNISEDENKKHNFPKIKQSIIKGLFKGIKIKNGDKDYVKNAIIKILLDLDITYEANEKSYFCSYSHSGVECHFKIDLYFNILLLEHYVVLNCLNRKKDNFKLVTELIKEKLEEIGDTSNYPENAI</sequence>
<gene>
    <name type="primary">KIN1</name>
    <name type="ORF">EBI_21713</name>
</gene>
<comment type="function">
    <text evidence="1">Serine/threonine protein kinase involved in regulation of exocytosis.</text>
</comment>
<comment type="catalytic activity">
    <reaction>
        <text>L-seryl-[protein] + ATP = O-phospho-L-seryl-[protein] + ADP + H(+)</text>
        <dbReference type="Rhea" id="RHEA:17989"/>
        <dbReference type="Rhea" id="RHEA-COMP:9863"/>
        <dbReference type="Rhea" id="RHEA-COMP:11604"/>
        <dbReference type="ChEBI" id="CHEBI:15378"/>
        <dbReference type="ChEBI" id="CHEBI:29999"/>
        <dbReference type="ChEBI" id="CHEBI:30616"/>
        <dbReference type="ChEBI" id="CHEBI:83421"/>
        <dbReference type="ChEBI" id="CHEBI:456216"/>
        <dbReference type="EC" id="2.7.11.1"/>
    </reaction>
</comment>
<comment type="catalytic activity">
    <reaction>
        <text>L-threonyl-[protein] + ATP = O-phospho-L-threonyl-[protein] + ADP + H(+)</text>
        <dbReference type="Rhea" id="RHEA:46608"/>
        <dbReference type="Rhea" id="RHEA-COMP:11060"/>
        <dbReference type="Rhea" id="RHEA-COMP:11605"/>
        <dbReference type="ChEBI" id="CHEBI:15378"/>
        <dbReference type="ChEBI" id="CHEBI:30013"/>
        <dbReference type="ChEBI" id="CHEBI:30616"/>
        <dbReference type="ChEBI" id="CHEBI:61977"/>
        <dbReference type="ChEBI" id="CHEBI:456216"/>
        <dbReference type="EC" id="2.7.11.1"/>
    </reaction>
</comment>
<comment type="subcellular location">
    <subcellularLocation>
        <location evidence="1">Cytoplasm</location>
    </subcellularLocation>
    <subcellularLocation>
        <location evidence="1">Cell membrane</location>
        <topology evidence="1">Peripheral membrane protein</topology>
        <orientation evidence="1">Cytoplasmic side</orientation>
    </subcellularLocation>
</comment>
<comment type="similarity">
    <text evidence="4">Belongs to the protein kinase superfamily. CAMK Ser/Thr protein kinase family. NIM1 subfamily.</text>
</comment>
<organism>
    <name type="scientific">Enterocytozoon bieneusi (strain H348)</name>
    <name type="common">Microsporidian parasite</name>
    <dbReference type="NCBI Taxonomy" id="481877"/>
    <lineage>
        <taxon>Eukaryota</taxon>
        <taxon>Fungi</taxon>
        <taxon>Fungi incertae sedis</taxon>
        <taxon>Microsporidia</taxon>
        <taxon>Enterocytozoonidae</taxon>
        <taxon>Enterocytozoon</taxon>
    </lineage>
</organism>
<protein>
    <recommendedName>
        <fullName>Probable serine/threonine-protein kinase KIN1 homolog</fullName>
        <ecNumber>2.7.11.1</ecNumber>
    </recommendedName>
</protein>
<evidence type="ECO:0000250" key="1"/>
<evidence type="ECO:0000255" key="2">
    <source>
        <dbReference type="PROSITE-ProRule" id="PRU00159"/>
    </source>
</evidence>
<evidence type="ECO:0000255" key="3">
    <source>
        <dbReference type="PROSITE-ProRule" id="PRU10027"/>
    </source>
</evidence>
<evidence type="ECO:0000305" key="4"/>
<feature type="chain" id="PRO_0000385509" description="Probable serine/threonine-protein kinase KIN1 homolog">
    <location>
        <begin position="1"/>
        <end position="595"/>
    </location>
</feature>
<feature type="domain" description="Protein kinase" evidence="2">
    <location>
        <begin position="67"/>
        <end position="316"/>
    </location>
</feature>
<feature type="active site" description="Proton acceptor" evidence="2 3">
    <location>
        <position position="188"/>
    </location>
</feature>
<feature type="binding site" evidence="2">
    <location>
        <begin position="73"/>
        <end position="81"/>
    </location>
    <ligand>
        <name>ATP</name>
        <dbReference type="ChEBI" id="CHEBI:30616"/>
    </ligand>
</feature>
<feature type="binding site" evidence="2">
    <location>
        <position position="96"/>
    </location>
    <ligand>
        <name>ATP</name>
        <dbReference type="ChEBI" id="CHEBI:30616"/>
    </ligand>
</feature>
<dbReference type="EC" id="2.7.11.1"/>
<dbReference type="EMBL" id="ABGB01000015">
    <property type="protein sequence ID" value="EED44563.1"/>
    <property type="molecule type" value="Genomic_DNA"/>
</dbReference>
<dbReference type="RefSeq" id="XP_002649544.1">
    <property type="nucleotide sequence ID" value="XM_002649498.1"/>
</dbReference>
<dbReference type="SMR" id="B7XHR6"/>
<dbReference type="STRING" id="481877.B7XHR6"/>
<dbReference type="VEuPathDB" id="MicrosporidiaDB:EBI_21713"/>
<dbReference type="HOGENOM" id="CLU_000288_59_11_1"/>
<dbReference type="InParanoid" id="B7XHR6"/>
<dbReference type="OrthoDB" id="193931at2759"/>
<dbReference type="GO" id="GO:0005737">
    <property type="term" value="C:cytoplasm"/>
    <property type="evidence" value="ECO:0007669"/>
    <property type="project" value="UniProtKB-SubCell"/>
</dbReference>
<dbReference type="GO" id="GO:0005886">
    <property type="term" value="C:plasma membrane"/>
    <property type="evidence" value="ECO:0007669"/>
    <property type="project" value="UniProtKB-SubCell"/>
</dbReference>
<dbReference type="GO" id="GO:0005524">
    <property type="term" value="F:ATP binding"/>
    <property type="evidence" value="ECO:0007669"/>
    <property type="project" value="UniProtKB-KW"/>
</dbReference>
<dbReference type="GO" id="GO:0106310">
    <property type="term" value="F:protein serine kinase activity"/>
    <property type="evidence" value="ECO:0007669"/>
    <property type="project" value="RHEA"/>
</dbReference>
<dbReference type="GO" id="GO:0004674">
    <property type="term" value="F:protein serine/threonine kinase activity"/>
    <property type="evidence" value="ECO:0007669"/>
    <property type="project" value="UniProtKB-KW"/>
</dbReference>
<dbReference type="GO" id="GO:0006887">
    <property type="term" value="P:exocytosis"/>
    <property type="evidence" value="ECO:0007669"/>
    <property type="project" value="UniProtKB-KW"/>
</dbReference>
<dbReference type="GO" id="GO:0035556">
    <property type="term" value="P:intracellular signal transduction"/>
    <property type="evidence" value="ECO:0007669"/>
    <property type="project" value="TreeGrafter"/>
</dbReference>
<dbReference type="GO" id="GO:0000226">
    <property type="term" value="P:microtubule cytoskeleton organization"/>
    <property type="evidence" value="ECO:0007669"/>
    <property type="project" value="TreeGrafter"/>
</dbReference>
<dbReference type="FunFam" id="1.10.510.10:FF:001222">
    <property type="entry name" value="Serine/threonine-protein kinase ppk25"/>
    <property type="match status" value="1"/>
</dbReference>
<dbReference type="Gene3D" id="1.10.510.10">
    <property type="entry name" value="Transferase(Phosphotransferase) domain 1"/>
    <property type="match status" value="1"/>
</dbReference>
<dbReference type="InterPro" id="IPR011009">
    <property type="entry name" value="Kinase-like_dom_sf"/>
</dbReference>
<dbReference type="InterPro" id="IPR000719">
    <property type="entry name" value="Prot_kinase_dom"/>
</dbReference>
<dbReference type="InterPro" id="IPR008271">
    <property type="entry name" value="Ser/Thr_kinase_AS"/>
</dbReference>
<dbReference type="PANTHER" id="PTHR24346:SF82">
    <property type="entry name" value="KP78A-RELATED"/>
    <property type="match status" value="1"/>
</dbReference>
<dbReference type="PANTHER" id="PTHR24346">
    <property type="entry name" value="MAP/MICROTUBULE AFFINITY-REGULATING KINASE"/>
    <property type="match status" value="1"/>
</dbReference>
<dbReference type="Pfam" id="PF00069">
    <property type="entry name" value="Pkinase"/>
    <property type="match status" value="1"/>
</dbReference>
<dbReference type="SMART" id="SM00220">
    <property type="entry name" value="S_TKc"/>
    <property type="match status" value="1"/>
</dbReference>
<dbReference type="SUPFAM" id="SSF56112">
    <property type="entry name" value="Protein kinase-like (PK-like)"/>
    <property type="match status" value="1"/>
</dbReference>
<dbReference type="PROSITE" id="PS50011">
    <property type="entry name" value="PROTEIN_KINASE_DOM"/>
    <property type="match status" value="1"/>
</dbReference>
<dbReference type="PROSITE" id="PS00108">
    <property type="entry name" value="PROTEIN_KINASE_ST"/>
    <property type="match status" value="1"/>
</dbReference>
<reference key="1">
    <citation type="journal article" date="2007" name="PLoS ONE">
        <title>Patterns of genome evolution among the microsporidian parasites Encephalitozoon cuniculi, Antonospora locustae and Enterocytozoon bieneusi.</title>
        <authorList>
            <person name="Corradi N."/>
            <person name="Akiyoshi D.E."/>
            <person name="Morrison H.G."/>
            <person name="Feng X."/>
            <person name="Weiss L.M."/>
            <person name="Tzipori S."/>
            <person name="Keeling P.J."/>
        </authorList>
    </citation>
    <scope>NUCLEOTIDE SEQUENCE [LARGE SCALE GENOMIC DNA]</scope>
    <source>
        <strain>H348</strain>
    </source>
</reference>
<reference key="2">
    <citation type="journal article" date="2009" name="PLoS Pathog.">
        <title>Genomic survey of the non-cultivatable opportunistic human pathogen, Enterocytozoon bieneusi.</title>
        <authorList>
            <person name="Akiyoshi D.E."/>
            <person name="Morrison H.G."/>
            <person name="Lei S."/>
            <person name="Feng X."/>
            <person name="Zhang Q."/>
            <person name="Corradi N."/>
            <person name="Mayanja H."/>
            <person name="Tumwine J.K."/>
            <person name="Keeling P.J."/>
            <person name="Weiss L.M."/>
            <person name="Tzipori S."/>
        </authorList>
    </citation>
    <scope>NUCLEOTIDE SEQUENCE [LARGE SCALE GENOMIC DNA]</scope>
    <source>
        <strain>H348</strain>
    </source>
</reference>
<keyword id="KW-0067">ATP-binding</keyword>
<keyword id="KW-1003">Cell membrane</keyword>
<keyword id="KW-0963">Cytoplasm</keyword>
<keyword id="KW-0268">Exocytosis</keyword>
<keyword id="KW-0418">Kinase</keyword>
<keyword id="KW-0472">Membrane</keyword>
<keyword id="KW-0547">Nucleotide-binding</keyword>
<keyword id="KW-0723">Serine/threonine-protein kinase</keyword>
<keyword id="KW-0808">Transferase</keyword>
<accession>B7XHR6</accession>
<proteinExistence type="inferred from homology"/>
<name>KIN1_ENTBH</name>